<proteinExistence type="inferred from homology"/>
<evidence type="ECO:0000255" key="1">
    <source>
        <dbReference type="HAMAP-Rule" id="MF_00141"/>
    </source>
</evidence>
<protein>
    <recommendedName>
        <fullName evidence="1">Elongation factor P</fullName>
        <shortName evidence="1">EF-P</shortName>
    </recommendedName>
</protein>
<comment type="function">
    <text evidence="1">Involved in peptide bond synthesis. Stimulates efficient translation and peptide-bond synthesis on native or reconstituted 70S ribosomes in vitro. Probably functions indirectly by altering the affinity of the ribosome for aminoacyl-tRNA, thus increasing their reactivity as acceptors for peptidyl transferase.</text>
</comment>
<comment type="pathway">
    <text evidence="1">Protein biosynthesis; polypeptide chain elongation.</text>
</comment>
<comment type="subcellular location">
    <subcellularLocation>
        <location evidence="1">Cytoplasm</location>
    </subcellularLocation>
</comment>
<comment type="similarity">
    <text evidence="1">Belongs to the elongation factor P family.</text>
</comment>
<gene>
    <name evidence="1" type="primary">efp</name>
    <name type="ordered locus">Cpha266_0237</name>
</gene>
<organism>
    <name type="scientific">Chlorobium phaeobacteroides (strain DSM 266 / SMG 266 / 2430)</name>
    <dbReference type="NCBI Taxonomy" id="290317"/>
    <lineage>
        <taxon>Bacteria</taxon>
        <taxon>Pseudomonadati</taxon>
        <taxon>Chlorobiota</taxon>
        <taxon>Chlorobiia</taxon>
        <taxon>Chlorobiales</taxon>
        <taxon>Chlorobiaceae</taxon>
        <taxon>Chlorobium/Pelodictyon group</taxon>
        <taxon>Chlorobium</taxon>
    </lineage>
</organism>
<reference key="1">
    <citation type="submission" date="2006-12" db="EMBL/GenBank/DDBJ databases">
        <title>Complete sequence of Chlorobium phaeobacteroides DSM 266.</title>
        <authorList>
            <consortium name="US DOE Joint Genome Institute"/>
            <person name="Copeland A."/>
            <person name="Lucas S."/>
            <person name="Lapidus A."/>
            <person name="Barry K."/>
            <person name="Detter J.C."/>
            <person name="Glavina del Rio T."/>
            <person name="Hammon N."/>
            <person name="Israni S."/>
            <person name="Pitluck S."/>
            <person name="Goltsman E."/>
            <person name="Schmutz J."/>
            <person name="Larimer F."/>
            <person name="Land M."/>
            <person name="Hauser L."/>
            <person name="Mikhailova N."/>
            <person name="Li T."/>
            <person name="Overmann J."/>
            <person name="Bryant D.A."/>
            <person name="Richardson P."/>
        </authorList>
    </citation>
    <scope>NUCLEOTIDE SEQUENCE [LARGE SCALE GENOMIC DNA]</scope>
    <source>
        <strain>DSM 266 / SMG 266 / 2430</strain>
    </source>
</reference>
<accession>A1BD27</accession>
<sequence length="188" mass="20898">MTSISNVSKGSIIRFKGEPHIIESLIHRTPGNLRAFYQANMKNLKTGRNVEFRFSASESVDVIVTERKPYQYLYKDGTDFVMMDSGTFDQINVPEITLGTSSRFLKDGITVVIVFSDDGSILDVEMPTFVEVEVTETSPTTKDDRATSGTKPAIVETGAEVGVPMFIQTGSIIRVDTRTGEYIERVKK</sequence>
<dbReference type="EMBL" id="CP000492">
    <property type="protein sequence ID" value="ABL64304.1"/>
    <property type="molecule type" value="Genomic_DNA"/>
</dbReference>
<dbReference type="RefSeq" id="WP_011744144.1">
    <property type="nucleotide sequence ID" value="NC_008639.1"/>
</dbReference>
<dbReference type="SMR" id="A1BD27"/>
<dbReference type="STRING" id="290317.Cpha266_0237"/>
<dbReference type="KEGG" id="cph:Cpha266_0237"/>
<dbReference type="eggNOG" id="COG0231">
    <property type="taxonomic scope" value="Bacteria"/>
</dbReference>
<dbReference type="HOGENOM" id="CLU_074944_0_1_10"/>
<dbReference type="OrthoDB" id="9801844at2"/>
<dbReference type="UniPathway" id="UPA00345"/>
<dbReference type="Proteomes" id="UP000008701">
    <property type="component" value="Chromosome"/>
</dbReference>
<dbReference type="GO" id="GO:0005737">
    <property type="term" value="C:cytoplasm"/>
    <property type="evidence" value="ECO:0007669"/>
    <property type="project" value="UniProtKB-SubCell"/>
</dbReference>
<dbReference type="GO" id="GO:0003746">
    <property type="term" value="F:translation elongation factor activity"/>
    <property type="evidence" value="ECO:0007669"/>
    <property type="project" value="UniProtKB-UniRule"/>
</dbReference>
<dbReference type="GO" id="GO:0043043">
    <property type="term" value="P:peptide biosynthetic process"/>
    <property type="evidence" value="ECO:0007669"/>
    <property type="project" value="InterPro"/>
</dbReference>
<dbReference type="CDD" id="cd04470">
    <property type="entry name" value="S1_EF-P_repeat_1"/>
    <property type="match status" value="1"/>
</dbReference>
<dbReference type="CDD" id="cd05794">
    <property type="entry name" value="S1_EF-P_repeat_2"/>
    <property type="match status" value="1"/>
</dbReference>
<dbReference type="FunFam" id="2.40.50.140:FF:000004">
    <property type="entry name" value="Elongation factor P"/>
    <property type="match status" value="1"/>
</dbReference>
<dbReference type="FunFam" id="2.40.50.140:FF:000009">
    <property type="entry name" value="Elongation factor P"/>
    <property type="match status" value="1"/>
</dbReference>
<dbReference type="Gene3D" id="2.30.30.30">
    <property type="match status" value="1"/>
</dbReference>
<dbReference type="Gene3D" id="2.40.50.140">
    <property type="entry name" value="Nucleic acid-binding proteins"/>
    <property type="match status" value="2"/>
</dbReference>
<dbReference type="HAMAP" id="MF_00141">
    <property type="entry name" value="EF_P"/>
    <property type="match status" value="1"/>
</dbReference>
<dbReference type="InterPro" id="IPR015365">
    <property type="entry name" value="Elong-fact-P_C"/>
</dbReference>
<dbReference type="InterPro" id="IPR012340">
    <property type="entry name" value="NA-bd_OB-fold"/>
</dbReference>
<dbReference type="InterPro" id="IPR014722">
    <property type="entry name" value="Rib_uL2_dom2"/>
</dbReference>
<dbReference type="InterPro" id="IPR020599">
    <property type="entry name" value="Transl_elong_fac_P/YeiP"/>
</dbReference>
<dbReference type="InterPro" id="IPR013185">
    <property type="entry name" value="Transl_elong_KOW-like"/>
</dbReference>
<dbReference type="InterPro" id="IPR001059">
    <property type="entry name" value="Transl_elong_P/YeiP_cen"/>
</dbReference>
<dbReference type="InterPro" id="IPR013852">
    <property type="entry name" value="Transl_elong_P/YeiP_CS"/>
</dbReference>
<dbReference type="InterPro" id="IPR011768">
    <property type="entry name" value="Transl_elongation_fac_P"/>
</dbReference>
<dbReference type="InterPro" id="IPR008991">
    <property type="entry name" value="Translation_prot_SH3-like_sf"/>
</dbReference>
<dbReference type="NCBIfam" id="TIGR00038">
    <property type="entry name" value="efp"/>
    <property type="match status" value="1"/>
</dbReference>
<dbReference type="NCBIfam" id="NF001810">
    <property type="entry name" value="PRK00529.1"/>
    <property type="match status" value="1"/>
</dbReference>
<dbReference type="PANTHER" id="PTHR30053">
    <property type="entry name" value="ELONGATION FACTOR P"/>
    <property type="match status" value="1"/>
</dbReference>
<dbReference type="PANTHER" id="PTHR30053:SF12">
    <property type="entry name" value="ELONGATION FACTOR P (EF-P) FAMILY PROTEIN"/>
    <property type="match status" value="1"/>
</dbReference>
<dbReference type="Pfam" id="PF01132">
    <property type="entry name" value="EFP"/>
    <property type="match status" value="1"/>
</dbReference>
<dbReference type="Pfam" id="PF08207">
    <property type="entry name" value="EFP_N"/>
    <property type="match status" value="1"/>
</dbReference>
<dbReference type="Pfam" id="PF09285">
    <property type="entry name" value="Elong-fact-P_C"/>
    <property type="match status" value="1"/>
</dbReference>
<dbReference type="PIRSF" id="PIRSF005901">
    <property type="entry name" value="EF-P"/>
    <property type="match status" value="1"/>
</dbReference>
<dbReference type="SMART" id="SM01185">
    <property type="entry name" value="EFP"/>
    <property type="match status" value="1"/>
</dbReference>
<dbReference type="SMART" id="SM00841">
    <property type="entry name" value="Elong-fact-P_C"/>
    <property type="match status" value="1"/>
</dbReference>
<dbReference type="SUPFAM" id="SSF50249">
    <property type="entry name" value="Nucleic acid-binding proteins"/>
    <property type="match status" value="2"/>
</dbReference>
<dbReference type="SUPFAM" id="SSF50104">
    <property type="entry name" value="Translation proteins SH3-like domain"/>
    <property type="match status" value="1"/>
</dbReference>
<dbReference type="PROSITE" id="PS01275">
    <property type="entry name" value="EFP"/>
    <property type="match status" value="1"/>
</dbReference>
<name>EFP_CHLPD</name>
<feature type="chain" id="PRO_1000010713" description="Elongation factor P">
    <location>
        <begin position="1"/>
        <end position="188"/>
    </location>
</feature>
<keyword id="KW-0963">Cytoplasm</keyword>
<keyword id="KW-0251">Elongation factor</keyword>
<keyword id="KW-0648">Protein biosynthesis</keyword>
<keyword id="KW-1185">Reference proteome</keyword>